<keyword id="KW-0414">Isoprene biosynthesis</keyword>
<keyword id="KW-0548">Nucleotidyltransferase</keyword>
<keyword id="KW-0808">Transferase</keyword>
<comment type="function">
    <text evidence="1">Catalyzes the formation of 4-diphosphocytidyl-2-C-methyl-D-erythritol from CTP and 2-C-methyl-D-erythritol 4-phosphate (MEP).</text>
</comment>
<comment type="catalytic activity">
    <reaction evidence="1">
        <text>2-C-methyl-D-erythritol 4-phosphate + CTP + H(+) = 4-CDP-2-C-methyl-D-erythritol + diphosphate</text>
        <dbReference type="Rhea" id="RHEA:13429"/>
        <dbReference type="ChEBI" id="CHEBI:15378"/>
        <dbReference type="ChEBI" id="CHEBI:33019"/>
        <dbReference type="ChEBI" id="CHEBI:37563"/>
        <dbReference type="ChEBI" id="CHEBI:57823"/>
        <dbReference type="ChEBI" id="CHEBI:58262"/>
        <dbReference type="EC" id="2.7.7.60"/>
    </reaction>
</comment>
<comment type="pathway">
    <text evidence="1">Isoprenoid biosynthesis; isopentenyl diphosphate biosynthesis via DXP pathway; isopentenyl diphosphate from 1-deoxy-D-xylulose 5-phosphate: step 2/6.</text>
</comment>
<comment type="similarity">
    <text evidence="1">Belongs to the IspD/TarI cytidylyltransferase family. IspD subfamily.</text>
</comment>
<proteinExistence type="inferred from homology"/>
<gene>
    <name evidence="1" type="primary">ispD</name>
    <name type="ordered locus">cgR_2564</name>
</gene>
<name>ISPD_CORGB</name>
<organism>
    <name type="scientific">Corynebacterium glutamicum (strain R)</name>
    <dbReference type="NCBI Taxonomy" id="340322"/>
    <lineage>
        <taxon>Bacteria</taxon>
        <taxon>Bacillati</taxon>
        <taxon>Actinomycetota</taxon>
        <taxon>Actinomycetes</taxon>
        <taxon>Mycobacteriales</taxon>
        <taxon>Corynebacteriaceae</taxon>
        <taxon>Corynebacterium</taxon>
    </lineage>
</organism>
<sequence length="256" mass="27594">MSSTRIPVIALLAAAGRGTRLGGPIPKAFVTLRERTLLERSLQAMLTSESVDEIIILVSPDMETYARDLLRKRGLLNDPEGVRIRLVHGGGERADSVWAGLQAILLDDATPDAIVLIHDSARALTPPGMIARVVRKVHEGATAVIPVLPVSDTIKRVSLDAGVVVDTPNRAELRAVQTPQGFLLSELVAANKKFFADPNPGFIPTDDASLMEWYGADVVCVQGDPMAFKVTTPIDMMLAQRITDEAEPTIFEVPGD</sequence>
<protein>
    <recommendedName>
        <fullName evidence="1">2-C-methyl-D-erythritol 4-phosphate cytidylyltransferase</fullName>
        <ecNumber evidence="1">2.7.7.60</ecNumber>
    </recommendedName>
    <alternativeName>
        <fullName evidence="1">4-diphosphocytidyl-2C-methyl-D-erythritol synthase</fullName>
    </alternativeName>
    <alternativeName>
        <fullName evidence="1">MEP cytidylyltransferase</fullName>
        <shortName evidence="1">MCT</shortName>
    </alternativeName>
</protein>
<feature type="chain" id="PRO_1000022920" description="2-C-methyl-D-erythritol 4-phosphate cytidylyltransferase">
    <location>
        <begin position="1"/>
        <end position="256"/>
    </location>
</feature>
<feature type="site" description="Transition state stabilizer" evidence="1">
    <location>
        <position position="20"/>
    </location>
</feature>
<feature type="site" description="Transition state stabilizer" evidence="1">
    <location>
        <position position="27"/>
    </location>
</feature>
<feature type="site" description="Positions MEP for the nucleophilic attack" evidence="1">
    <location>
        <position position="170"/>
    </location>
</feature>
<feature type="site" description="Positions MEP for the nucleophilic attack" evidence="1">
    <location>
        <position position="229"/>
    </location>
</feature>
<dbReference type="EC" id="2.7.7.60" evidence="1"/>
<dbReference type="EMBL" id="AP009044">
    <property type="protein sequence ID" value="BAF55576.1"/>
    <property type="molecule type" value="Genomic_DNA"/>
</dbReference>
<dbReference type="RefSeq" id="WP_003853869.1">
    <property type="nucleotide sequence ID" value="NC_009342.1"/>
</dbReference>
<dbReference type="SMR" id="A4QH60"/>
<dbReference type="KEGG" id="cgt:cgR_2564"/>
<dbReference type="HOGENOM" id="CLU_061281_1_1_11"/>
<dbReference type="PhylomeDB" id="A4QH60"/>
<dbReference type="UniPathway" id="UPA00056">
    <property type="reaction ID" value="UER00093"/>
</dbReference>
<dbReference type="Proteomes" id="UP000006698">
    <property type="component" value="Chromosome"/>
</dbReference>
<dbReference type="GO" id="GO:0050518">
    <property type="term" value="F:2-C-methyl-D-erythritol 4-phosphate cytidylyltransferase activity"/>
    <property type="evidence" value="ECO:0007669"/>
    <property type="project" value="UniProtKB-UniRule"/>
</dbReference>
<dbReference type="GO" id="GO:0019288">
    <property type="term" value="P:isopentenyl diphosphate biosynthetic process, methylerythritol 4-phosphate pathway"/>
    <property type="evidence" value="ECO:0007669"/>
    <property type="project" value="UniProtKB-UniRule"/>
</dbReference>
<dbReference type="CDD" id="cd02516">
    <property type="entry name" value="CDP-ME_synthetase"/>
    <property type="match status" value="1"/>
</dbReference>
<dbReference type="FunFam" id="3.90.550.10:FF:000003">
    <property type="entry name" value="2-C-methyl-D-erythritol 4-phosphate cytidylyltransferase"/>
    <property type="match status" value="1"/>
</dbReference>
<dbReference type="Gene3D" id="3.90.550.10">
    <property type="entry name" value="Spore Coat Polysaccharide Biosynthesis Protein SpsA, Chain A"/>
    <property type="match status" value="1"/>
</dbReference>
<dbReference type="HAMAP" id="MF_00108">
    <property type="entry name" value="IspD"/>
    <property type="match status" value="1"/>
</dbReference>
<dbReference type="InterPro" id="IPR001228">
    <property type="entry name" value="IspD"/>
</dbReference>
<dbReference type="InterPro" id="IPR034683">
    <property type="entry name" value="IspD/TarI"/>
</dbReference>
<dbReference type="InterPro" id="IPR050088">
    <property type="entry name" value="IspD/TarI_cytidylyltransf_bact"/>
</dbReference>
<dbReference type="InterPro" id="IPR018294">
    <property type="entry name" value="ISPD_synthase_CS"/>
</dbReference>
<dbReference type="InterPro" id="IPR029044">
    <property type="entry name" value="Nucleotide-diphossugar_trans"/>
</dbReference>
<dbReference type="NCBIfam" id="TIGR00453">
    <property type="entry name" value="ispD"/>
    <property type="match status" value="1"/>
</dbReference>
<dbReference type="PANTHER" id="PTHR32125">
    <property type="entry name" value="2-C-METHYL-D-ERYTHRITOL 4-PHOSPHATE CYTIDYLYLTRANSFERASE, CHLOROPLASTIC"/>
    <property type="match status" value="1"/>
</dbReference>
<dbReference type="PANTHER" id="PTHR32125:SF4">
    <property type="entry name" value="2-C-METHYL-D-ERYTHRITOL 4-PHOSPHATE CYTIDYLYLTRANSFERASE, CHLOROPLASTIC"/>
    <property type="match status" value="1"/>
</dbReference>
<dbReference type="Pfam" id="PF01128">
    <property type="entry name" value="IspD"/>
    <property type="match status" value="1"/>
</dbReference>
<dbReference type="SUPFAM" id="SSF53448">
    <property type="entry name" value="Nucleotide-diphospho-sugar transferases"/>
    <property type="match status" value="1"/>
</dbReference>
<dbReference type="PROSITE" id="PS01295">
    <property type="entry name" value="ISPD"/>
    <property type="match status" value="1"/>
</dbReference>
<accession>A4QH60</accession>
<evidence type="ECO:0000255" key="1">
    <source>
        <dbReference type="HAMAP-Rule" id="MF_00108"/>
    </source>
</evidence>
<reference key="1">
    <citation type="journal article" date="2007" name="Microbiology">
        <title>Comparative analysis of the Corynebacterium glutamicum group and complete genome sequence of strain R.</title>
        <authorList>
            <person name="Yukawa H."/>
            <person name="Omumasaba C.A."/>
            <person name="Nonaka H."/>
            <person name="Kos P."/>
            <person name="Okai N."/>
            <person name="Suzuki N."/>
            <person name="Suda M."/>
            <person name="Tsuge Y."/>
            <person name="Watanabe J."/>
            <person name="Ikeda Y."/>
            <person name="Vertes A.A."/>
            <person name="Inui M."/>
        </authorList>
    </citation>
    <scope>NUCLEOTIDE SEQUENCE [LARGE SCALE GENOMIC DNA]</scope>
    <source>
        <strain>R</strain>
    </source>
</reference>